<protein>
    <recommendedName>
        <fullName evidence="1">ATPase GET3</fullName>
        <ecNumber evidence="1">3.6.-.-</ecNumber>
    </recommendedName>
    <alternativeName>
        <fullName evidence="1">Arsenical pump-driving ATPase</fullName>
    </alternativeName>
    <alternativeName>
        <fullName evidence="1">Arsenite-stimulated ATPase</fullName>
    </alternativeName>
    <alternativeName>
        <fullName evidence="1">Golgi to ER traffic protein 3</fullName>
    </alternativeName>
    <alternativeName>
        <fullName evidence="1">Guided entry of tail-anchored proteins 3</fullName>
    </alternativeName>
</protein>
<evidence type="ECO:0000255" key="1">
    <source>
        <dbReference type="HAMAP-Rule" id="MF_03112"/>
    </source>
</evidence>
<comment type="function">
    <text evidence="1">ATPase required for the post-translational delivery of tail-anchored (TA) proteins to the endoplasmic reticulum. Recognizes and selectively binds the transmembrane domain of TA proteins in the cytosol. This complex then targets to the endoplasmic reticulum by membrane-bound receptors, where the tail-anchored protein is released for insertion. This process is regulated by ATP binding and hydrolysis. ATP binding drives the homodimer towards the closed dimer state, facilitating recognition of newly synthesized TA membrane proteins. ATP hydrolysis is required for insertion. Subsequently, the homodimer reverts towards the open dimer state, lowering its affinity for the membrane-bound receptor, and returning it to the cytosol to initiate a new round of targeting.</text>
</comment>
<comment type="subunit">
    <text evidence="1">Homodimer.</text>
</comment>
<comment type="subcellular location">
    <subcellularLocation>
        <location evidence="1">Cytoplasm</location>
    </subcellularLocation>
    <subcellularLocation>
        <location evidence="1">Endoplasmic reticulum</location>
    </subcellularLocation>
</comment>
<comment type="similarity">
    <text evidence="1">Belongs to the arsA ATPase family.</text>
</comment>
<proteinExistence type="inferred from homology"/>
<accession>Q4P7S5</accession>
<accession>A0A0D1C3F9</accession>
<gene>
    <name evidence="1" type="primary">GET3</name>
    <name type="ORF">UMAG_03838</name>
</gene>
<feature type="chain" id="PRO_0000388235" description="ATPase GET3">
    <location>
        <begin position="1"/>
        <end position="332"/>
    </location>
</feature>
<feature type="active site" evidence="1">
    <location>
        <position position="61"/>
    </location>
</feature>
<feature type="binding site" evidence="1">
    <location>
        <begin position="32"/>
        <end position="39"/>
    </location>
    <ligand>
        <name>ATP</name>
        <dbReference type="ChEBI" id="CHEBI:30616"/>
    </ligand>
</feature>
<feature type="binding site" evidence="1">
    <location>
        <position position="235"/>
    </location>
    <ligand>
        <name>ATP</name>
        <dbReference type="ChEBI" id="CHEBI:30616"/>
    </ligand>
</feature>
<feature type="binding site" evidence="1">
    <location>
        <position position="262"/>
    </location>
    <ligand>
        <name>ATP</name>
        <dbReference type="ChEBI" id="CHEBI:30616"/>
    </ligand>
</feature>
<feature type="binding site" evidence="1">
    <location>
        <position position="273"/>
    </location>
    <ligand>
        <name>Zn(2+)</name>
        <dbReference type="ChEBI" id="CHEBI:29105"/>
        <note>ligand shared between dimeric partners</note>
    </ligand>
</feature>
<feature type="binding site" evidence="1">
    <location>
        <position position="276"/>
    </location>
    <ligand>
        <name>Zn(2+)</name>
        <dbReference type="ChEBI" id="CHEBI:29105"/>
        <note>ligand shared between dimeric partners</note>
    </ligand>
</feature>
<organism>
    <name type="scientific">Mycosarcoma maydis</name>
    <name type="common">Corn smut fungus</name>
    <name type="synonym">Ustilago maydis</name>
    <dbReference type="NCBI Taxonomy" id="5270"/>
    <lineage>
        <taxon>Eukaryota</taxon>
        <taxon>Fungi</taxon>
        <taxon>Dikarya</taxon>
        <taxon>Basidiomycota</taxon>
        <taxon>Ustilaginomycotina</taxon>
        <taxon>Ustilaginomycetes</taxon>
        <taxon>Ustilaginales</taxon>
        <taxon>Ustilaginaceae</taxon>
        <taxon>Mycosarcoma</taxon>
    </lineage>
</organism>
<dbReference type="EC" id="3.6.-.-" evidence="1"/>
<dbReference type="EMBL" id="CM003149">
    <property type="protein sequence ID" value="KIS68257.1"/>
    <property type="molecule type" value="Genomic_DNA"/>
</dbReference>
<dbReference type="RefSeq" id="XP_011390272.1">
    <property type="nucleotide sequence ID" value="XM_011391970.1"/>
</dbReference>
<dbReference type="SMR" id="Q4P7S5"/>
<dbReference type="FunCoup" id="Q4P7S5">
    <property type="interactions" value="522"/>
</dbReference>
<dbReference type="STRING" id="237631.Q4P7S5"/>
<dbReference type="EnsemblFungi" id="KIS68257">
    <property type="protein sequence ID" value="KIS68257"/>
    <property type="gene ID" value="UMAG_03838"/>
</dbReference>
<dbReference type="GeneID" id="23564187"/>
<dbReference type="KEGG" id="uma:UMAG_03838"/>
<dbReference type="VEuPathDB" id="FungiDB:UMAG_03838"/>
<dbReference type="eggNOG" id="KOG2825">
    <property type="taxonomic scope" value="Eukaryota"/>
</dbReference>
<dbReference type="HOGENOM" id="CLU_040761_0_0_1"/>
<dbReference type="InParanoid" id="Q4P7S5"/>
<dbReference type="OMA" id="MDAPYEF"/>
<dbReference type="OrthoDB" id="1770at2759"/>
<dbReference type="Proteomes" id="UP000000561">
    <property type="component" value="Chromosome 10"/>
</dbReference>
<dbReference type="GO" id="GO:0043529">
    <property type="term" value="C:GET complex"/>
    <property type="evidence" value="ECO:0000318"/>
    <property type="project" value="GO_Central"/>
</dbReference>
<dbReference type="GO" id="GO:0005524">
    <property type="term" value="F:ATP binding"/>
    <property type="evidence" value="ECO:0007669"/>
    <property type="project" value="UniProtKB-UniRule"/>
</dbReference>
<dbReference type="GO" id="GO:0016887">
    <property type="term" value="F:ATP hydrolysis activity"/>
    <property type="evidence" value="ECO:0000318"/>
    <property type="project" value="GO_Central"/>
</dbReference>
<dbReference type="GO" id="GO:0046872">
    <property type="term" value="F:metal ion binding"/>
    <property type="evidence" value="ECO:0007669"/>
    <property type="project" value="UniProtKB-KW"/>
</dbReference>
<dbReference type="GO" id="GO:0071816">
    <property type="term" value="P:tail-anchored membrane protein insertion into ER membrane"/>
    <property type="evidence" value="ECO:0000318"/>
    <property type="project" value="GO_Central"/>
</dbReference>
<dbReference type="CDD" id="cd02035">
    <property type="entry name" value="ArsA"/>
    <property type="match status" value="1"/>
</dbReference>
<dbReference type="FunFam" id="3.40.50.300:FF:000235">
    <property type="entry name" value="ATPase ASNA1"/>
    <property type="match status" value="1"/>
</dbReference>
<dbReference type="Gene3D" id="3.40.50.300">
    <property type="entry name" value="P-loop containing nucleotide triphosphate hydrolases"/>
    <property type="match status" value="1"/>
</dbReference>
<dbReference type="HAMAP" id="MF_03112">
    <property type="entry name" value="Asna1_Get3"/>
    <property type="match status" value="1"/>
</dbReference>
<dbReference type="InterPro" id="IPR025723">
    <property type="entry name" value="Anion-transp_ATPase-like_dom"/>
</dbReference>
<dbReference type="InterPro" id="IPR016300">
    <property type="entry name" value="ATPase_ArsA/GET3"/>
</dbReference>
<dbReference type="InterPro" id="IPR027542">
    <property type="entry name" value="ATPase_ArsA/GET3_euk"/>
</dbReference>
<dbReference type="InterPro" id="IPR027417">
    <property type="entry name" value="P-loop_NTPase"/>
</dbReference>
<dbReference type="NCBIfam" id="TIGR00345">
    <property type="entry name" value="GET3_arsA_TRC40"/>
    <property type="match status" value="1"/>
</dbReference>
<dbReference type="PANTHER" id="PTHR10803">
    <property type="entry name" value="ARSENICAL PUMP-DRIVING ATPASE ARSENITE-TRANSLOCATING ATPASE"/>
    <property type="match status" value="1"/>
</dbReference>
<dbReference type="PANTHER" id="PTHR10803:SF3">
    <property type="entry name" value="ATPASE GET3"/>
    <property type="match status" value="1"/>
</dbReference>
<dbReference type="Pfam" id="PF02374">
    <property type="entry name" value="ArsA_ATPase"/>
    <property type="match status" value="1"/>
</dbReference>
<dbReference type="SUPFAM" id="SSF52540">
    <property type="entry name" value="P-loop containing nucleoside triphosphate hydrolases"/>
    <property type="match status" value="1"/>
</dbReference>
<keyword id="KW-0067">ATP-binding</keyword>
<keyword id="KW-0963">Cytoplasm</keyword>
<keyword id="KW-0256">Endoplasmic reticulum</keyword>
<keyword id="KW-0378">Hydrolase</keyword>
<keyword id="KW-0479">Metal-binding</keyword>
<keyword id="KW-0547">Nucleotide-binding</keyword>
<keyword id="KW-1185">Reference proteome</keyword>
<keyword id="KW-0813">Transport</keyword>
<keyword id="KW-0862">Zinc</keyword>
<sequence>MSSAAVVEDALEPTLQNILDQKTLKWLFVGGKGGVGKTTTSCSLAIQLSKVRESVLLISTDPAHNLSDAFGQKFGKEATKVNGFDNLSAMEIDPNSSIQEMIEQSDSQGGAMGSMMQDLAFAIPGVDEAMGFAEIMKHVKSMEYSVIVFDTAPTGHTLRFLSFPSVLEKALAKFSTLGRSLGPMLGQFQSMLGGGGPNQEDMFAKLESMREVITEVNTQFKDPEKTTFVCVCIAEFLSLYETERLIQELTSYEIDTHAIVCNQLLYPKKDSNCQHCRVRKQMQDKYVGEMMELYADDFHIVKMPLLTEEVRGTDKLKDFSNFLVTPYVPPTE</sequence>
<reference key="1">
    <citation type="journal article" date="2006" name="Nature">
        <title>Insights from the genome of the biotrophic fungal plant pathogen Ustilago maydis.</title>
        <authorList>
            <person name="Kaemper J."/>
            <person name="Kahmann R."/>
            <person name="Boelker M."/>
            <person name="Ma L.-J."/>
            <person name="Brefort T."/>
            <person name="Saville B.J."/>
            <person name="Banuett F."/>
            <person name="Kronstad J.W."/>
            <person name="Gold S.E."/>
            <person name="Mueller O."/>
            <person name="Perlin M.H."/>
            <person name="Woesten H.A.B."/>
            <person name="de Vries R."/>
            <person name="Ruiz-Herrera J."/>
            <person name="Reynaga-Pena C.G."/>
            <person name="Snetselaar K."/>
            <person name="McCann M."/>
            <person name="Perez-Martin J."/>
            <person name="Feldbruegge M."/>
            <person name="Basse C.W."/>
            <person name="Steinberg G."/>
            <person name="Ibeas J.I."/>
            <person name="Holloman W."/>
            <person name="Guzman P."/>
            <person name="Farman M.L."/>
            <person name="Stajich J.E."/>
            <person name="Sentandreu R."/>
            <person name="Gonzalez-Prieto J.M."/>
            <person name="Kennell J.C."/>
            <person name="Molina L."/>
            <person name="Schirawski J."/>
            <person name="Mendoza-Mendoza A."/>
            <person name="Greilinger D."/>
            <person name="Muench K."/>
            <person name="Roessel N."/>
            <person name="Scherer M."/>
            <person name="Vranes M."/>
            <person name="Ladendorf O."/>
            <person name="Vincon V."/>
            <person name="Fuchs U."/>
            <person name="Sandrock B."/>
            <person name="Meng S."/>
            <person name="Ho E.C.H."/>
            <person name="Cahill M.J."/>
            <person name="Boyce K.J."/>
            <person name="Klose J."/>
            <person name="Klosterman S.J."/>
            <person name="Deelstra H.J."/>
            <person name="Ortiz-Castellanos L."/>
            <person name="Li W."/>
            <person name="Sanchez-Alonso P."/>
            <person name="Schreier P.H."/>
            <person name="Haeuser-Hahn I."/>
            <person name="Vaupel M."/>
            <person name="Koopmann E."/>
            <person name="Friedrich G."/>
            <person name="Voss H."/>
            <person name="Schlueter T."/>
            <person name="Margolis J."/>
            <person name="Platt D."/>
            <person name="Swimmer C."/>
            <person name="Gnirke A."/>
            <person name="Chen F."/>
            <person name="Vysotskaia V."/>
            <person name="Mannhaupt G."/>
            <person name="Gueldener U."/>
            <person name="Muensterkoetter M."/>
            <person name="Haase D."/>
            <person name="Oesterheld M."/>
            <person name="Mewes H.-W."/>
            <person name="Mauceli E.W."/>
            <person name="DeCaprio D."/>
            <person name="Wade C.M."/>
            <person name="Butler J."/>
            <person name="Young S.K."/>
            <person name="Jaffe D.B."/>
            <person name="Calvo S.E."/>
            <person name="Nusbaum C."/>
            <person name="Galagan J.E."/>
            <person name="Birren B.W."/>
        </authorList>
    </citation>
    <scope>NUCLEOTIDE SEQUENCE [LARGE SCALE GENOMIC DNA]</scope>
    <source>
        <strain>DSM 14603 / FGSC 9021 / UM521</strain>
    </source>
</reference>
<reference key="2">
    <citation type="submission" date="2014-09" db="EMBL/GenBank/DDBJ databases">
        <authorList>
            <person name="Gueldener U."/>
            <person name="Muensterkoetter M."/>
            <person name="Walter M.C."/>
            <person name="Mannhaupt G."/>
            <person name="Kahmann R."/>
        </authorList>
    </citation>
    <scope>GENOME REANNOTATION</scope>
    <source>
        <strain>DSM 14603 / FGSC 9021 / UM521</strain>
    </source>
</reference>
<name>GET3_MYCMD</name>